<evidence type="ECO:0000255" key="1">
    <source>
        <dbReference type="HAMAP-Rule" id="MF_00105"/>
    </source>
</evidence>
<dbReference type="EMBL" id="AL935263">
    <property type="protein sequence ID" value="CCC78881.1"/>
    <property type="molecule type" value="Genomic_DNA"/>
</dbReference>
<dbReference type="RefSeq" id="YP_004889395.1">
    <property type="nucleotide sequence ID" value="NC_004567.2"/>
</dbReference>
<dbReference type="SMR" id="Q88WQ9"/>
<dbReference type="STRING" id="220668.lp_1563"/>
<dbReference type="EnsemblBacteria" id="CCC78881">
    <property type="protein sequence ID" value="CCC78881"/>
    <property type="gene ID" value="lp_1563"/>
</dbReference>
<dbReference type="KEGG" id="lpl:lp_1563"/>
<dbReference type="PATRIC" id="fig|220668.9.peg.1315"/>
<dbReference type="eggNOG" id="COG0782">
    <property type="taxonomic scope" value="Bacteria"/>
</dbReference>
<dbReference type="HOGENOM" id="CLU_101379_2_1_9"/>
<dbReference type="OrthoDB" id="9808774at2"/>
<dbReference type="PhylomeDB" id="Q88WQ9"/>
<dbReference type="Proteomes" id="UP000000432">
    <property type="component" value="Chromosome"/>
</dbReference>
<dbReference type="GO" id="GO:0003677">
    <property type="term" value="F:DNA binding"/>
    <property type="evidence" value="ECO:0007669"/>
    <property type="project" value="UniProtKB-UniRule"/>
</dbReference>
<dbReference type="GO" id="GO:0070063">
    <property type="term" value="F:RNA polymerase binding"/>
    <property type="evidence" value="ECO:0007669"/>
    <property type="project" value="InterPro"/>
</dbReference>
<dbReference type="GO" id="GO:0006354">
    <property type="term" value="P:DNA-templated transcription elongation"/>
    <property type="evidence" value="ECO:0007669"/>
    <property type="project" value="TreeGrafter"/>
</dbReference>
<dbReference type="GO" id="GO:0032784">
    <property type="term" value="P:regulation of DNA-templated transcription elongation"/>
    <property type="evidence" value="ECO:0007669"/>
    <property type="project" value="UniProtKB-UniRule"/>
</dbReference>
<dbReference type="FunFam" id="1.10.287.180:FF:000001">
    <property type="entry name" value="Transcription elongation factor GreA"/>
    <property type="match status" value="1"/>
</dbReference>
<dbReference type="FunFam" id="3.10.50.30:FF:000001">
    <property type="entry name" value="Transcription elongation factor GreA"/>
    <property type="match status" value="1"/>
</dbReference>
<dbReference type="Gene3D" id="3.10.50.30">
    <property type="entry name" value="Transcription elongation factor, GreA/GreB, C-terminal domain"/>
    <property type="match status" value="1"/>
</dbReference>
<dbReference type="Gene3D" id="1.10.287.180">
    <property type="entry name" value="Transcription elongation factor, GreA/GreB, N-terminal domain"/>
    <property type="match status" value="1"/>
</dbReference>
<dbReference type="HAMAP" id="MF_00105">
    <property type="entry name" value="GreA_GreB"/>
    <property type="match status" value="1"/>
</dbReference>
<dbReference type="InterPro" id="IPR036953">
    <property type="entry name" value="GreA/GreB_C_sf"/>
</dbReference>
<dbReference type="InterPro" id="IPR018151">
    <property type="entry name" value="TF_GreA/GreB_CS"/>
</dbReference>
<dbReference type="InterPro" id="IPR006359">
    <property type="entry name" value="Tscrpt_elong_fac_GreA"/>
</dbReference>
<dbReference type="InterPro" id="IPR028624">
    <property type="entry name" value="Tscrpt_elong_fac_GreA/B"/>
</dbReference>
<dbReference type="InterPro" id="IPR001437">
    <property type="entry name" value="Tscrpt_elong_fac_GreA/B_C"/>
</dbReference>
<dbReference type="InterPro" id="IPR023459">
    <property type="entry name" value="Tscrpt_elong_fac_GreA/B_fam"/>
</dbReference>
<dbReference type="InterPro" id="IPR022691">
    <property type="entry name" value="Tscrpt_elong_fac_GreA/B_N"/>
</dbReference>
<dbReference type="InterPro" id="IPR036805">
    <property type="entry name" value="Tscrpt_elong_fac_GreA/B_N_sf"/>
</dbReference>
<dbReference type="NCBIfam" id="TIGR01462">
    <property type="entry name" value="greA"/>
    <property type="match status" value="1"/>
</dbReference>
<dbReference type="NCBIfam" id="NF001263">
    <property type="entry name" value="PRK00226.1-4"/>
    <property type="match status" value="1"/>
</dbReference>
<dbReference type="PANTHER" id="PTHR30437">
    <property type="entry name" value="TRANSCRIPTION ELONGATION FACTOR GREA"/>
    <property type="match status" value="1"/>
</dbReference>
<dbReference type="PANTHER" id="PTHR30437:SF4">
    <property type="entry name" value="TRANSCRIPTION ELONGATION FACTOR GREA"/>
    <property type="match status" value="1"/>
</dbReference>
<dbReference type="Pfam" id="PF01272">
    <property type="entry name" value="GreA_GreB"/>
    <property type="match status" value="1"/>
</dbReference>
<dbReference type="Pfam" id="PF03449">
    <property type="entry name" value="GreA_GreB_N"/>
    <property type="match status" value="1"/>
</dbReference>
<dbReference type="PIRSF" id="PIRSF006092">
    <property type="entry name" value="GreA_GreB"/>
    <property type="match status" value="1"/>
</dbReference>
<dbReference type="SUPFAM" id="SSF54534">
    <property type="entry name" value="FKBP-like"/>
    <property type="match status" value="1"/>
</dbReference>
<dbReference type="SUPFAM" id="SSF46557">
    <property type="entry name" value="GreA transcript cleavage protein, N-terminal domain"/>
    <property type="match status" value="1"/>
</dbReference>
<dbReference type="PROSITE" id="PS00829">
    <property type="entry name" value="GREAB_1"/>
    <property type="match status" value="1"/>
</dbReference>
<dbReference type="PROSITE" id="PS00830">
    <property type="entry name" value="GREAB_2"/>
    <property type="match status" value="1"/>
</dbReference>
<reference key="1">
    <citation type="journal article" date="2003" name="Proc. Natl. Acad. Sci. U.S.A.">
        <title>Complete genome sequence of Lactobacillus plantarum WCFS1.</title>
        <authorList>
            <person name="Kleerebezem M."/>
            <person name="Boekhorst J."/>
            <person name="van Kranenburg R."/>
            <person name="Molenaar D."/>
            <person name="Kuipers O.P."/>
            <person name="Leer R."/>
            <person name="Tarchini R."/>
            <person name="Peters S.A."/>
            <person name="Sandbrink H.M."/>
            <person name="Fiers M.W.E.J."/>
            <person name="Stiekema W."/>
            <person name="Klein Lankhorst R.M."/>
            <person name="Bron P.A."/>
            <person name="Hoffer S.M."/>
            <person name="Nierop Groot M.N."/>
            <person name="Kerkhoven R."/>
            <person name="De Vries M."/>
            <person name="Ursing B."/>
            <person name="De Vos W.M."/>
            <person name="Siezen R.J."/>
        </authorList>
    </citation>
    <scope>NUCLEOTIDE SEQUENCE [LARGE SCALE GENOMIC DNA]</scope>
    <source>
        <strain>ATCC BAA-793 / NCIMB 8826 / WCFS1</strain>
    </source>
</reference>
<reference key="2">
    <citation type="journal article" date="2012" name="J. Bacteriol.">
        <title>Complete resequencing and reannotation of the Lactobacillus plantarum WCFS1 genome.</title>
        <authorList>
            <person name="Siezen R.J."/>
            <person name="Francke C."/>
            <person name="Renckens B."/>
            <person name="Boekhorst J."/>
            <person name="Wels M."/>
            <person name="Kleerebezem M."/>
            <person name="van Hijum S.A."/>
        </authorList>
    </citation>
    <scope>NUCLEOTIDE SEQUENCE [LARGE SCALE GENOMIC DNA]</scope>
    <scope>GENOME REANNOTATION</scope>
    <source>
        <strain>ATCC BAA-793 / NCIMB 8826 / WCFS1</strain>
    </source>
</reference>
<organism>
    <name type="scientific">Lactiplantibacillus plantarum (strain ATCC BAA-793 / NCIMB 8826 / WCFS1)</name>
    <name type="common">Lactobacillus plantarum</name>
    <dbReference type="NCBI Taxonomy" id="220668"/>
    <lineage>
        <taxon>Bacteria</taxon>
        <taxon>Bacillati</taxon>
        <taxon>Bacillota</taxon>
        <taxon>Bacilli</taxon>
        <taxon>Lactobacillales</taxon>
        <taxon>Lactobacillaceae</taxon>
        <taxon>Lactiplantibacillus</taxon>
    </lineage>
</organism>
<accession>Q88WQ9</accession>
<accession>F9UNU2</accession>
<comment type="function">
    <text evidence="1">Necessary for efficient RNA polymerase transcription elongation past template-encoded arresting sites. The arresting sites in DNA have the property of trapping a certain fraction of elongating RNA polymerases that pass through, resulting in locked ternary complexes. Cleavage of the nascent transcript by cleavage factors such as GreA or GreB allows the resumption of elongation from the new 3'terminus. GreA releases sequences of 2 to 3 nucleotides.</text>
</comment>
<comment type="similarity">
    <text evidence="1">Belongs to the GreA/GreB family.</text>
</comment>
<sequence>MAEDKTYPMTEEGKVKLEKELEDLRINQRPEIINRIKIARSYGDLSENSEYESAKNEQSLLENRIKTVEHMLQYAEIIDSDKIDETEVSVGKIVTFKELPDEEPESYTIVGAAEADPMVGKISNDSPIAKGLIGHHVDEEVAINIPAGTMTVKILKVENA</sequence>
<name>GREA2_LACPL</name>
<feature type="chain" id="PRO_0000176935" description="Transcription elongation factor GreA 2">
    <location>
        <begin position="1"/>
        <end position="160"/>
    </location>
</feature>
<feature type="coiled-coil region" evidence="1">
    <location>
        <begin position="9"/>
        <end position="73"/>
    </location>
</feature>
<protein>
    <recommendedName>
        <fullName evidence="1">Transcription elongation factor GreA 2</fullName>
    </recommendedName>
    <alternativeName>
        <fullName evidence="1">Transcript cleavage factor GreA 2</fullName>
    </alternativeName>
</protein>
<proteinExistence type="inferred from homology"/>
<gene>
    <name evidence="1" type="primary">greA2</name>
    <name type="ordered locus">lp_1563</name>
</gene>
<keyword id="KW-0175">Coiled coil</keyword>
<keyword id="KW-0238">DNA-binding</keyword>
<keyword id="KW-1185">Reference proteome</keyword>
<keyword id="KW-0804">Transcription</keyword>
<keyword id="KW-0805">Transcription regulation</keyword>